<feature type="chain" id="PRO_0000112004" description="Probable ATP-dependent 6-phosphofructokinase">
    <location>
        <begin position="1"/>
        <end position="321"/>
    </location>
</feature>
<feature type="active site" description="Proton acceptor" evidence="1">
    <location>
        <position position="138"/>
    </location>
</feature>
<feature type="binding site" evidence="1">
    <location>
        <position position="20"/>
    </location>
    <ligand>
        <name>ATP</name>
        <dbReference type="ChEBI" id="CHEBI:30616"/>
    </ligand>
</feature>
<feature type="binding site" evidence="1">
    <location>
        <begin position="82"/>
        <end position="83"/>
    </location>
    <ligand>
        <name>ATP</name>
        <dbReference type="ChEBI" id="CHEBI:30616"/>
    </ligand>
</feature>
<feature type="binding site" description="in other chain" evidence="1">
    <location>
        <begin position="136"/>
        <end position="138"/>
    </location>
    <ligand>
        <name>substrate</name>
        <note>ligand shared between dimeric partners</note>
    </ligand>
</feature>
<feature type="binding site" description="in other chain" evidence="1">
    <location>
        <begin position="180"/>
        <end position="182"/>
    </location>
    <ligand>
        <name>substrate</name>
        <note>ligand shared between dimeric partners</note>
    </ligand>
</feature>
<feature type="binding site" description="in other chain" evidence="1">
    <location>
        <position position="235"/>
    </location>
    <ligand>
        <name>substrate</name>
        <note>ligand shared between dimeric partners</note>
    </ligand>
</feature>
<feature type="binding site" evidence="1">
    <location>
        <position position="259"/>
    </location>
    <ligand>
        <name>substrate</name>
        <note>ligand shared between dimeric partners</note>
    </ligand>
</feature>
<feature type="binding site" description="in other chain" evidence="1">
    <location>
        <begin position="265"/>
        <end position="268"/>
    </location>
    <ligand>
        <name>substrate</name>
        <note>ligand shared between dimeric partners</note>
    </ligand>
</feature>
<dbReference type="EC" id="2.7.1.11"/>
<dbReference type="EMBL" id="AF222894">
    <property type="protein sequence ID" value="AAF30592.1"/>
    <property type="molecule type" value="Genomic_DNA"/>
</dbReference>
<dbReference type="RefSeq" id="WP_006689121.1">
    <property type="nucleotide sequence ID" value="NC_002162.1"/>
</dbReference>
<dbReference type="SMR" id="Q9PQV8"/>
<dbReference type="STRING" id="273119.UU185"/>
<dbReference type="EnsemblBacteria" id="AAF30592">
    <property type="protein sequence ID" value="AAF30592"/>
    <property type="gene ID" value="UU185"/>
</dbReference>
<dbReference type="GeneID" id="29672722"/>
<dbReference type="KEGG" id="uur:UU185"/>
<dbReference type="eggNOG" id="COG0205">
    <property type="taxonomic scope" value="Bacteria"/>
</dbReference>
<dbReference type="HOGENOM" id="CLU_020655_0_1_14"/>
<dbReference type="OrthoDB" id="9802503at2"/>
<dbReference type="UniPathway" id="UPA00109">
    <property type="reaction ID" value="UER00182"/>
</dbReference>
<dbReference type="Proteomes" id="UP000000423">
    <property type="component" value="Chromosome"/>
</dbReference>
<dbReference type="GO" id="GO:0005945">
    <property type="term" value="C:6-phosphofructokinase complex"/>
    <property type="evidence" value="ECO:0007669"/>
    <property type="project" value="TreeGrafter"/>
</dbReference>
<dbReference type="GO" id="GO:0003872">
    <property type="term" value="F:6-phosphofructokinase activity"/>
    <property type="evidence" value="ECO:0007669"/>
    <property type="project" value="UniProtKB-EC"/>
</dbReference>
<dbReference type="GO" id="GO:0016208">
    <property type="term" value="F:AMP binding"/>
    <property type="evidence" value="ECO:0007669"/>
    <property type="project" value="TreeGrafter"/>
</dbReference>
<dbReference type="GO" id="GO:0005524">
    <property type="term" value="F:ATP binding"/>
    <property type="evidence" value="ECO:0007669"/>
    <property type="project" value="UniProtKB-KW"/>
</dbReference>
<dbReference type="GO" id="GO:0070095">
    <property type="term" value="F:fructose-6-phosphate binding"/>
    <property type="evidence" value="ECO:0007669"/>
    <property type="project" value="TreeGrafter"/>
</dbReference>
<dbReference type="GO" id="GO:0042802">
    <property type="term" value="F:identical protein binding"/>
    <property type="evidence" value="ECO:0007669"/>
    <property type="project" value="TreeGrafter"/>
</dbReference>
<dbReference type="GO" id="GO:0046872">
    <property type="term" value="F:metal ion binding"/>
    <property type="evidence" value="ECO:0007669"/>
    <property type="project" value="UniProtKB-KW"/>
</dbReference>
<dbReference type="GO" id="GO:0048029">
    <property type="term" value="F:monosaccharide binding"/>
    <property type="evidence" value="ECO:0007669"/>
    <property type="project" value="TreeGrafter"/>
</dbReference>
<dbReference type="GO" id="GO:0061621">
    <property type="term" value="P:canonical glycolysis"/>
    <property type="evidence" value="ECO:0007669"/>
    <property type="project" value="TreeGrafter"/>
</dbReference>
<dbReference type="GO" id="GO:0030388">
    <property type="term" value="P:fructose 1,6-bisphosphate metabolic process"/>
    <property type="evidence" value="ECO:0007669"/>
    <property type="project" value="TreeGrafter"/>
</dbReference>
<dbReference type="GO" id="GO:0006002">
    <property type="term" value="P:fructose 6-phosphate metabolic process"/>
    <property type="evidence" value="ECO:0007669"/>
    <property type="project" value="InterPro"/>
</dbReference>
<dbReference type="Gene3D" id="3.40.50.450">
    <property type="match status" value="1"/>
</dbReference>
<dbReference type="Gene3D" id="3.40.50.460">
    <property type="entry name" value="Phosphofructokinase domain"/>
    <property type="match status" value="1"/>
</dbReference>
<dbReference type="InterPro" id="IPR022953">
    <property type="entry name" value="ATP_PFK"/>
</dbReference>
<dbReference type="InterPro" id="IPR012003">
    <property type="entry name" value="ATP_PFK_prok-type"/>
</dbReference>
<dbReference type="InterPro" id="IPR000023">
    <property type="entry name" value="Phosphofructokinase_dom"/>
</dbReference>
<dbReference type="InterPro" id="IPR035966">
    <property type="entry name" value="PKF_sf"/>
</dbReference>
<dbReference type="PANTHER" id="PTHR13697:SF4">
    <property type="entry name" value="ATP-DEPENDENT 6-PHOSPHOFRUCTOKINASE"/>
    <property type="match status" value="1"/>
</dbReference>
<dbReference type="PANTHER" id="PTHR13697">
    <property type="entry name" value="PHOSPHOFRUCTOKINASE"/>
    <property type="match status" value="1"/>
</dbReference>
<dbReference type="Pfam" id="PF00365">
    <property type="entry name" value="PFK"/>
    <property type="match status" value="1"/>
</dbReference>
<dbReference type="PIRSF" id="PIRSF000532">
    <property type="entry name" value="ATP_PFK_prok"/>
    <property type="match status" value="1"/>
</dbReference>
<dbReference type="PRINTS" id="PR00476">
    <property type="entry name" value="PHFRCTKINASE"/>
</dbReference>
<dbReference type="SUPFAM" id="SSF53784">
    <property type="entry name" value="Phosphofructokinase"/>
    <property type="match status" value="1"/>
</dbReference>
<gene>
    <name type="primary">pfkA</name>
    <name type="ordered locus">UU185</name>
</gene>
<protein>
    <recommendedName>
        <fullName>Probable ATP-dependent 6-phosphofructokinase</fullName>
        <shortName>ATP-PFK</shortName>
        <shortName>Phosphofructokinase</shortName>
        <ecNumber>2.7.1.11</ecNumber>
    </recommendedName>
    <alternativeName>
        <fullName>Phosphohexokinase</fullName>
    </alternativeName>
</protein>
<accession>Q9PQV8</accession>
<organism>
    <name type="scientific">Ureaplasma parvum serovar 3 (strain ATCC 700970)</name>
    <dbReference type="NCBI Taxonomy" id="273119"/>
    <lineage>
        <taxon>Bacteria</taxon>
        <taxon>Bacillati</taxon>
        <taxon>Mycoplasmatota</taxon>
        <taxon>Mycoplasmoidales</taxon>
        <taxon>Mycoplasmoidaceae</taxon>
        <taxon>Ureaplasma</taxon>
    </lineage>
</organism>
<proteinExistence type="inferred from homology"/>
<reference key="1">
    <citation type="journal article" date="2000" name="Nature">
        <title>The complete sequence of the mucosal pathogen Ureaplasma urealyticum.</title>
        <authorList>
            <person name="Glass J.I."/>
            <person name="Lefkowitz E.J."/>
            <person name="Glass J.S."/>
            <person name="Heiner C.R."/>
            <person name="Chen E.Y."/>
            <person name="Cassell G.H."/>
        </authorList>
    </citation>
    <scope>NUCLEOTIDE SEQUENCE [LARGE SCALE GENOMIC DNA]</scope>
    <source>
        <strain>ATCC 700970</strain>
    </source>
</reference>
<comment type="function">
    <text evidence="1">Catalyzes the phosphorylation of D-fructose 6-phosphate to fructose 1,6-bisphosphate by ATP, the first committing step of glycolysis.</text>
</comment>
<comment type="catalytic activity">
    <reaction evidence="1">
        <text>beta-D-fructose 6-phosphate + ATP = beta-D-fructose 1,6-bisphosphate + ADP + H(+)</text>
        <dbReference type="Rhea" id="RHEA:16109"/>
        <dbReference type="ChEBI" id="CHEBI:15378"/>
        <dbReference type="ChEBI" id="CHEBI:30616"/>
        <dbReference type="ChEBI" id="CHEBI:32966"/>
        <dbReference type="ChEBI" id="CHEBI:57634"/>
        <dbReference type="ChEBI" id="CHEBI:456216"/>
        <dbReference type="EC" id="2.7.1.11"/>
    </reaction>
</comment>
<comment type="cofactor">
    <cofactor evidence="1">
        <name>Mg(2+)</name>
        <dbReference type="ChEBI" id="CHEBI:18420"/>
    </cofactor>
</comment>
<comment type="pathway">
    <text evidence="1">Carbohydrate degradation; glycolysis; D-glyceraldehyde 3-phosphate and glycerone phosphate from D-glucose: step 3/4.</text>
</comment>
<comment type="subunit">
    <text evidence="1">Homotetramer.</text>
</comment>
<comment type="subcellular location">
    <subcellularLocation>
        <location evidence="1">Cytoplasm</location>
    </subcellularLocation>
</comment>
<comment type="similarity">
    <text evidence="2">Belongs to the phosphofructokinase type A (PFKA) family.</text>
</comment>
<evidence type="ECO:0000250" key="1">
    <source>
        <dbReference type="UniProtKB" id="P0A796"/>
    </source>
</evidence>
<evidence type="ECO:0000305" key="2"/>
<name>PFKA_UREPA</name>
<keyword id="KW-0067">ATP-binding</keyword>
<keyword id="KW-0963">Cytoplasm</keyword>
<keyword id="KW-0324">Glycolysis</keyword>
<keyword id="KW-0418">Kinase</keyword>
<keyword id="KW-0460">Magnesium</keyword>
<keyword id="KW-0479">Metal-binding</keyword>
<keyword id="KW-0547">Nucleotide-binding</keyword>
<keyword id="KW-1185">Reference proteome</keyword>
<keyword id="KW-0808">Transferase</keyword>
<sequence>MNQVNFLNLDKNILIITSGGDAPGMNASLISLIHRLMNNNFNVFIGIEGLLGLYNNLIEPIKDKRVFDVYFNEQGTVIKTSRFIKLDINDKKTQIIKDNLLSHNIQKIIILGGQGSMQAGLVLTKMGFEVFGILHTIDNDFSETQMCIGALSAASFNQKLLKCLNYTAKAHCAFNLVELMGRECSWLVNNSVGKLKPILMLTNQDNKYTVDEVIDLIKDKINSIKEYDPLIIVQELIYDQKWYELLVKTFEQKLHKSLRITILNYLQRGAPVSDFDLQLAKDSANVLVDFIVNQNDIKNTNNMYVVINKFDNKLEVIKFNK</sequence>